<reference key="1">
    <citation type="journal article" date="2005" name="PLoS Biol.">
        <title>The genome sequence of Rickettsia felis identifies the first putative conjugative plasmid in an obligate intracellular parasite.</title>
        <authorList>
            <person name="Ogata H."/>
            <person name="Renesto P."/>
            <person name="Audic S."/>
            <person name="Robert C."/>
            <person name="Blanc G."/>
            <person name="Fournier P.-E."/>
            <person name="Parinello H."/>
            <person name="Claverie J.-M."/>
            <person name="Raoult D."/>
        </authorList>
    </citation>
    <scope>NUCLEOTIDE SEQUENCE [LARGE SCALE GENOMIC DNA]</scope>
    <source>
        <strain>ATCC VR-1525 / URRWXCal2</strain>
    </source>
</reference>
<gene>
    <name evidence="1" type="primary">secY</name>
    <name type="ordered locus">RF_0298</name>
</gene>
<proteinExistence type="inferred from homology"/>
<protein>
    <recommendedName>
        <fullName evidence="1">Protein translocase subunit SecY</fullName>
    </recommendedName>
</protein>
<comment type="function">
    <text evidence="1">The central subunit of the protein translocation channel SecYEG. Consists of two halves formed by TMs 1-5 and 6-10. These two domains form a lateral gate at the front which open onto the bilayer between TMs 2 and 7, and are clamped together by SecE at the back. The channel is closed by both a pore ring composed of hydrophobic SecY resides and a short helix (helix 2A) on the extracellular side of the membrane which forms a plug. The plug probably moves laterally to allow the channel to open. The ring and the pore may move independently.</text>
</comment>
<comment type="subunit">
    <text evidence="1">Component of the Sec protein translocase complex. Heterotrimer consisting of SecY, SecE and SecG subunits. The heterotrimers can form oligomers, although 1 heterotrimer is thought to be able to translocate proteins. Interacts with the ribosome. Interacts with SecDF, and other proteins may be involved. Interacts with SecA.</text>
</comment>
<comment type="subcellular location">
    <subcellularLocation>
        <location evidence="1">Cell inner membrane</location>
        <topology evidence="1">Multi-pass membrane protein</topology>
    </subcellularLocation>
</comment>
<comment type="similarity">
    <text evidence="1">Belongs to the SecY/SEC61-alpha family.</text>
</comment>
<evidence type="ECO:0000255" key="1">
    <source>
        <dbReference type="HAMAP-Rule" id="MF_01465"/>
    </source>
</evidence>
<sequence length="433" mass="47351">MGQNFSKKSGNDLVSRIVFTILILIVCRFGSFIPIPGIDSIALSSVAEKNQSGILGMFNMLSGGSLGRMSIFALAIMPYITASIIIQLMSVAYKPLENLKKEGEVGKRKVNQLSRYLTVLLASFQAYGVAISLESIVTNTGPVVILAGFFFRVTTVITLVVGTMLLMWLGEQITQRGIGNGTSLIIFIGIISGVPSAIISMFELSRKGALSPLIALAVCIGVVVLIAIIIFFEKAQRKLLVQYPKRQVGNKIYGGEATHMPLKLNTSGVIPPIFASSILLFPATLANFSNSNSETMGMLTYYLGHGKPVYILLYVALIMFFSFFYTAIVFNSEETANNLRKYGAYIPGKRPGKNTSDYFDYILTRLTVIGGIYLSVICVIPELLMNKYVISLSLGGTSFLIVVNVVLDTMTQIQTYLFSSKYEGLMKKVKLKN</sequence>
<keyword id="KW-0997">Cell inner membrane</keyword>
<keyword id="KW-1003">Cell membrane</keyword>
<keyword id="KW-0472">Membrane</keyword>
<keyword id="KW-0653">Protein transport</keyword>
<keyword id="KW-0811">Translocation</keyword>
<keyword id="KW-0812">Transmembrane</keyword>
<keyword id="KW-1133">Transmembrane helix</keyword>
<keyword id="KW-0813">Transport</keyword>
<dbReference type="EMBL" id="CP000053">
    <property type="protein sequence ID" value="AAY61149.1"/>
    <property type="molecule type" value="Genomic_DNA"/>
</dbReference>
<dbReference type="SMR" id="Q4UMQ9"/>
<dbReference type="STRING" id="315456.RF_0298"/>
<dbReference type="KEGG" id="rfe:RF_0298"/>
<dbReference type="eggNOG" id="COG0201">
    <property type="taxonomic scope" value="Bacteria"/>
</dbReference>
<dbReference type="HOGENOM" id="CLU_030313_0_2_5"/>
<dbReference type="OrthoDB" id="9809248at2"/>
<dbReference type="Proteomes" id="UP000008548">
    <property type="component" value="Chromosome"/>
</dbReference>
<dbReference type="GO" id="GO:0005886">
    <property type="term" value="C:plasma membrane"/>
    <property type="evidence" value="ECO:0007669"/>
    <property type="project" value="UniProtKB-SubCell"/>
</dbReference>
<dbReference type="GO" id="GO:0065002">
    <property type="term" value="P:intracellular protein transmembrane transport"/>
    <property type="evidence" value="ECO:0007669"/>
    <property type="project" value="UniProtKB-UniRule"/>
</dbReference>
<dbReference type="GO" id="GO:0006605">
    <property type="term" value="P:protein targeting"/>
    <property type="evidence" value="ECO:0007669"/>
    <property type="project" value="UniProtKB-UniRule"/>
</dbReference>
<dbReference type="GO" id="GO:0043952">
    <property type="term" value="P:protein transport by the Sec complex"/>
    <property type="evidence" value="ECO:0007669"/>
    <property type="project" value="UniProtKB-UniRule"/>
</dbReference>
<dbReference type="FunFam" id="1.10.3370.10:FF:000001">
    <property type="entry name" value="Preprotein translocase subunit SecY"/>
    <property type="match status" value="1"/>
</dbReference>
<dbReference type="Gene3D" id="1.10.3370.10">
    <property type="entry name" value="SecY subunit domain"/>
    <property type="match status" value="1"/>
</dbReference>
<dbReference type="HAMAP" id="MF_01465">
    <property type="entry name" value="SecY"/>
    <property type="match status" value="1"/>
</dbReference>
<dbReference type="InterPro" id="IPR026593">
    <property type="entry name" value="SecY"/>
</dbReference>
<dbReference type="InterPro" id="IPR002208">
    <property type="entry name" value="SecY/SEC61-alpha"/>
</dbReference>
<dbReference type="InterPro" id="IPR030659">
    <property type="entry name" value="SecY_CS"/>
</dbReference>
<dbReference type="InterPro" id="IPR023201">
    <property type="entry name" value="SecY_dom_sf"/>
</dbReference>
<dbReference type="NCBIfam" id="TIGR00967">
    <property type="entry name" value="3a0501s007"/>
    <property type="match status" value="1"/>
</dbReference>
<dbReference type="PANTHER" id="PTHR10906">
    <property type="entry name" value="SECY/SEC61-ALPHA FAMILY MEMBER"/>
    <property type="match status" value="1"/>
</dbReference>
<dbReference type="Pfam" id="PF00344">
    <property type="entry name" value="SecY"/>
    <property type="match status" value="1"/>
</dbReference>
<dbReference type="PIRSF" id="PIRSF004557">
    <property type="entry name" value="SecY"/>
    <property type="match status" value="1"/>
</dbReference>
<dbReference type="PRINTS" id="PR00303">
    <property type="entry name" value="SECYTRNLCASE"/>
</dbReference>
<dbReference type="SUPFAM" id="SSF103491">
    <property type="entry name" value="Preprotein translocase SecY subunit"/>
    <property type="match status" value="1"/>
</dbReference>
<dbReference type="PROSITE" id="PS00755">
    <property type="entry name" value="SECY_1"/>
    <property type="match status" value="1"/>
</dbReference>
<dbReference type="PROSITE" id="PS00756">
    <property type="entry name" value="SECY_2"/>
    <property type="match status" value="1"/>
</dbReference>
<accession>Q4UMQ9</accession>
<name>SECY_RICFE</name>
<feature type="chain" id="PRO_0000277281" description="Protein translocase subunit SecY">
    <location>
        <begin position="1"/>
        <end position="433"/>
    </location>
</feature>
<feature type="transmembrane region" description="Helical" evidence="1">
    <location>
        <begin position="17"/>
        <end position="37"/>
    </location>
</feature>
<feature type="transmembrane region" description="Helical" evidence="1">
    <location>
        <begin position="71"/>
        <end position="91"/>
    </location>
</feature>
<feature type="transmembrane region" description="Helical" evidence="1">
    <location>
        <begin position="117"/>
        <end position="137"/>
    </location>
</feature>
<feature type="transmembrane region" description="Helical" evidence="1">
    <location>
        <begin position="141"/>
        <end position="161"/>
    </location>
</feature>
<feature type="transmembrane region" description="Helical" evidence="1">
    <location>
        <begin position="184"/>
        <end position="204"/>
    </location>
</feature>
<feature type="transmembrane region" description="Helical" evidence="1">
    <location>
        <begin position="212"/>
        <end position="232"/>
    </location>
</feature>
<feature type="transmembrane region" description="Helical" evidence="1">
    <location>
        <begin position="268"/>
        <end position="288"/>
    </location>
</feature>
<feature type="transmembrane region" description="Helical" evidence="1">
    <location>
        <begin position="310"/>
        <end position="330"/>
    </location>
</feature>
<feature type="transmembrane region" description="Helical" evidence="1">
    <location>
        <begin position="366"/>
        <end position="386"/>
    </location>
</feature>
<feature type="transmembrane region" description="Helical" evidence="1">
    <location>
        <begin position="388"/>
        <end position="408"/>
    </location>
</feature>
<organism>
    <name type="scientific">Rickettsia felis (strain ATCC VR-1525 / URRWXCal2)</name>
    <name type="common">Rickettsia azadi</name>
    <dbReference type="NCBI Taxonomy" id="315456"/>
    <lineage>
        <taxon>Bacteria</taxon>
        <taxon>Pseudomonadati</taxon>
        <taxon>Pseudomonadota</taxon>
        <taxon>Alphaproteobacteria</taxon>
        <taxon>Rickettsiales</taxon>
        <taxon>Rickettsiaceae</taxon>
        <taxon>Rickettsieae</taxon>
        <taxon>Rickettsia</taxon>
        <taxon>spotted fever group</taxon>
    </lineage>
</organism>